<reference key="1">
    <citation type="submission" date="2006-03" db="EMBL/GenBank/DDBJ databases">
        <title>Complete sequence of Rhodopseudomonas palustris BisB5.</title>
        <authorList>
            <consortium name="US DOE Joint Genome Institute"/>
            <person name="Copeland A."/>
            <person name="Lucas S."/>
            <person name="Lapidus A."/>
            <person name="Barry K."/>
            <person name="Detter J.C."/>
            <person name="Glavina del Rio T."/>
            <person name="Hammon N."/>
            <person name="Israni S."/>
            <person name="Dalin E."/>
            <person name="Tice H."/>
            <person name="Pitluck S."/>
            <person name="Chain P."/>
            <person name="Malfatti S."/>
            <person name="Shin M."/>
            <person name="Vergez L."/>
            <person name="Schmutz J."/>
            <person name="Larimer F."/>
            <person name="Land M."/>
            <person name="Hauser L."/>
            <person name="Pelletier D.A."/>
            <person name="Kyrpides N."/>
            <person name="Lykidis A."/>
            <person name="Oda Y."/>
            <person name="Harwood C.S."/>
            <person name="Richardson P."/>
        </authorList>
    </citation>
    <scope>NUCLEOTIDE SEQUENCE [LARGE SCALE GENOMIC DNA]</scope>
    <source>
        <strain>BisB5</strain>
    </source>
</reference>
<feature type="chain" id="PRO_0000263858" description="Translation initiation factor IF-1">
    <location>
        <begin position="1"/>
        <end position="94"/>
    </location>
</feature>
<feature type="domain" description="S1-like" evidence="1">
    <location>
        <begin position="1"/>
        <end position="72"/>
    </location>
</feature>
<feature type="region of interest" description="Disordered" evidence="2">
    <location>
        <begin position="71"/>
        <end position="94"/>
    </location>
</feature>
<feature type="compositionally biased region" description="Low complexity" evidence="2">
    <location>
        <begin position="82"/>
        <end position="94"/>
    </location>
</feature>
<evidence type="ECO:0000255" key="1">
    <source>
        <dbReference type="HAMAP-Rule" id="MF_00075"/>
    </source>
</evidence>
<evidence type="ECO:0000256" key="2">
    <source>
        <dbReference type="SAM" id="MobiDB-lite"/>
    </source>
</evidence>
<organism>
    <name type="scientific">Rhodopseudomonas palustris (strain BisB5)</name>
    <dbReference type="NCBI Taxonomy" id="316057"/>
    <lineage>
        <taxon>Bacteria</taxon>
        <taxon>Pseudomonadati</taxon>
        <taxon>Pseudomonadota</taxon>
        <taxon>Alphaproteobacteria</taxon>
        <taxon>Hyphomicrobiales</taxon>
        <taxon>Nitrobacteraceae</taxon>
        <taxon>Rhodopseudomonas</taxon>
    </lineage>
</organism>
<dbReference type="EMBL" id="CP000283">
    <property type="protein sequence ID" value="ABE40735.1"/>
    <property type="molecule type" value="Genomic_DNA"/>
</dbReference>
<dbReference type="SMR" id="Q133K4"/>
<dbReference type="STRING" id="316057.RPD_3512"/>
<dbReference type="KEGG" id="rpd:RPD_3512"/>
<dbReference type="eggNOG" id="COG0361">
    <property type="taxonomic scope" value="Bacteria"/>
</dbReference>
<dbReference type="HOGENOM" id="CLU_151267_4_1_5"/>
<dbReference type="BioCyc" id="RPAL316057:RPD_RS17665-MONOMER"/>
<dbReference type="Proteomes" id="UP000001818">
    <property type="component" value="Chromosome"/>
</dbReference>
<dbReference type="GO" id="GO:0005829">
    <property type="term" value="C:cytosol"/>
    <property type="evidence" value="ECO:0007669"/>
    <property type="project" value="TreeGrafter"/>
</dbReference>
<dbReference type="GO" id="GO:0043022">
    <property type="term" value="F:ribosome binding"/>
    <property type="evidence" value="ECO:0007669"/>
    <property type="project" value="UniProtKB-UniRule"/>
</dbReference>
<dbReference type="GO" id="GO:0019843">
    <property type="term" value="F:rRNA binding"/>
    <property type="evidence" value="ECO:0007669"/>
    <property type="project" value="UniProtKB-UniRule"/>
</dbReference>
<dbReference type="GO" id="GO:0003743">
    <property type="term" value="F:translation initiation factor activity"/>
    <property type="evidence" value="ECO:0007669"/>
    <property type="project" value="UniProtKB-UniRule"/>
</dbReference>
<dbReference type="CDD" id="cd04451">
    <property type="entry name" value="S1_IF1"/>
    <property type="match status" value="1"/>
</dbReference>
<dbReference type="FunFam" id="2.40.50.140:FF:000002">
    <property type="entry name" value="Translation initiation factor IF-1"/>
    <property type="match status" value="1"/>
</dbReference>
<dbReference type="Gene3D" id="2.40.50.140">
    <property type="entry name" value="Nucleic acid-binding proteins"/>
    <property type="match status" value="1"/>
</dbReference>
<dbReference type="HAMAP" id="MF_00075">
    <property type="entry name" value="IF_1"/>
    <property type="match status" value="1"/>
</dbReference>
<dbReference type="InterPro" id="IPR012340">
    <property type="entry name" value="NA-bd_OB-fold"/>
</dbReference>
<dbReference type="InterPro" id="IPR006196">
    <property type="entry name" value="RNA-binding_domain_S1_IF1"/>
</dbReference>
<dbReference type="InterPro" id="IPR004368">
    <property type="entry name" value="TIF_IF1"/>
</dbReference>
<dbReference type="NCBIfam" id="TIGR00008">
    <property type="entry name" value="infA"/>
    <property type="match status" value="1"/>
</dbReference>
<dbReference type="PANTHER" id="PTHR33370">
    <property type="entry name" value="TRANSLATION INITIATION FACTOR IF-1, CHLOROPLASTIC"/>
    <property type="match status" value="1"/>
</dbReference>
<dbReference type="PANTHER" id="PTHR33370:SF1">
    <property type="entry name" value="TRANSLATION INITIATION FACTOR IF-1, CHLOROPLASTIC"/>
    <property type="match status" value="1"/>
</dbReference>
<dbReference type="Pfam" id="PF01176">
    <property type="entry name" value="eIF-1a"/>
    <property type="match status" value="1"/>
</dbReference>
<dbReference type="SUPFAM" id="SSF50249">
    <property type="entry name" value="Nucleic acid-binding proteins"/>
    <property type="match status" value="1"/>
</dbReference>
<dbReference type="PROSITE" id="PS50832">
    <property type="entry name" value="S1_IF1_TYPE"/>
    <property type="match status" value="1"/>
</dbReference>
<protein>
    <recommendedName>
        <fullName evidence="1">Translation initiation factor IF-1</fullName>
    </recommendedName>
</protein>
<gene>
    <name evidence="1" type="primary">infA</name>
    <name type="ordered locus">RPD_3512</name>
</gene>
<proteinExistence type="inferred from homology"/>
<name>IF1_RHOPS</name>
<keyword id="KW-0963">Cytoplasm</keyword>
<keyword id="KW-0396">Initiation factor</keyword>
<keyword id="KW-0648">Protein biosynthesis</keyword>
<keyword id="KW-0694">RNA-binding</keyword>
<keyword id="KW-0699">rRNA-binding</keyword>
<comment type="function">
    <text evidence="1">One of the essential components for the initiation of protein synthesis. Stabilizes the binding of IF-2 and IF-3 on the 30S subunit to which N-formylmethionyl-tRNA(fMet) subsequently binds. Helps modulate mRNA selection, yielding the 30S pre-initiation complex (PIC). Upon addition of the 50S ribosomal subunit IF-1, IF-2 and IF-3 are released leaving the mature 70S translation initiation complex.</text>
</comment>
<comment type="subunit">
    <text evidence="1">Component of the 30S ribosomal translation pre-initiation complex which assembles on the 30S ribosome in the order IF-2 and IF-3, IF-1 and N-formylmethionyl-tRNA(fMet); mRNA recruitment can occur at any time during PIC assembly.</text>
</comment>
<comment type="subcellular location">
    <subcellularLocation>
        <location evidence="1">Cytoplasm</location>
    </subcellularLocation>
</comment>
<comment type="similarity">
    <text evidence="1">Belongs to the IF-1 family.</text>
</comment>
<accession>Q133K4</accession>
<sequence>MAKEELIQFEGLVTEILPDARYRVQLDAGHEIVAYTAGKMKKNRIKTLAGDRVTIEMSPYDLEKGRLIFRHKDERPGGTGAPRGAPPRGQFRRR</sequence>